<name>DSBI_SALPA</name>
<comment type="function">
    <text evidence="1">Required for disulfide bond formation in some proteins. Part of a redox system composed of DsbI and DsbL that mediates formation of an essential disulfide bond in AssT.</text>
</comment>
<comment type="subunit">
    <text evidence="1">Interacts with DsbL.</text>
</comment>
<comment type="subcellular location">
    <subcellularLocation>
        <location evidence="1">Cell inner membrane</location>
        <topology evidence="1">Multi-pass membrane protein</topology>
    </subcellularLocation>
</comment>
<comment type="similarity">
    <text evidence="1">Belongs to the DsbB family. DsbI subfamily.</text>
</comment>
<keyword id="KW-0997">Cell inner membrane</keyword>
<keyword id="KW-1003">Cell membrane</keyword>
<keyword id="KW-1015">Disulfide bond</keyword>
<keyword id="KW-0249">Electron transport</keyword>
<keyword id="KW-0472">Membrane</keyword>
<keyword id="KW-0560">Oxidoreductase</keyword>
<keyword id="KW-0676">Redox-active center</keyword>
<keyword id="KW-0812">Transmembrane</keyword>
<keyword id="KW-1133">Transmembrane helix</keyword>
<keyword id="KW-0813">Transport</keyword>
<feature type="chain" id="PRO_0000295646" description="Protein-disulfide oxidoreductase DsbI">
    <location>
        <begin position="1"/>
        <end position="225"/>
    </location>
</feature>
<feature type="transmembrane region" description="Helical" evidence="1">
    <location>
        <begin position="27"/>
        <end position="47"/>
    </location>
</feature>
<feature type="transmembrane region" description="Helical" evidence="1">
    <location>
        <begin position="65"/>
        <end position="85"/>
    </location>
</feature>
<feature type="transmembrane region" description="Helical" evidence="1">
    <location>
        <begin position="87"/>
        <end position="107"/>
    </location>
</feature>
<feature type="transmembrane region" description="Helical" evidence="1">
    <location>
        <begin position="199"/>
        <end position="219"/>
    </location>
</feature>
<feature type="disulfide bond" description="Redox-active" evidence="1">
    <location>
        <begin position="56"/>
        <end position="59"/>
    </location>
</feature>
<feature type="disulfide bond" description="Redox-active" evidence="1">
    <location>
        <begin position="128"/>
        <end position="154"/>
    </location>
</feature>
<reference key="1">
    <citation type="journal article" date="2004" name="Nat. Genet.">
        <title>Comparison of genome degradation in Paratyphi A and Typhi, human-restricted serovars of Salmonella enterica that cause typhoid.</title>
        <authorList>
            <person name="McClelland M."/>
            <person name="Sanderson K.E."/>
            <person name="Clifton S.W."/>
            <person name="Latreille P."/>
            <person name="Porwollik S."/>
            <person name="Sabo A."/>
            <person name="Meyer R."/>
            <person name="Bieri T."/>
            <person name="Ozersky P."/>
            <person name="McLellan M."/>
            <person name="Harkins C.R."/>
            <person name="Wang C."/>
            <person name="Nguyen C."/>
            <person name="Berghoff A."/>
            <person name="Elliott G."/>
            <person name="Kohlberg S."/>
            <person name="Strong C."/>
            <person name="Du F."/>
            <person name="Carter J."/>
            <person name="Kremizki C."/>
            <person name="Layman D."/>
            <person name="Leonard S."/>
            <person name="Sun H."/>
            <person name="Fulton L."/>
            <person name="Nash W."/>
            <person name="Miner T."/>
            <person name="Minx P."/>
            <person name="Delehaunty K."/>
            <person name="Fronick C."/>
            <person name="Magrini V."/>
            <person name="Nhan M."/>
            <person name="Warren W."/>
            <person name="Florea L."/>
            <person name="Spieth J."/>
            <person name="Wilson R.K."/>
        </authorList>
    </citation>
    <scope>NUCLEOTIDE SEQUENCE [LARGE SCALE GENOMIC DNA]</scope>
    <source>
        <strain>ATCC 9150 / SARB42</strain>
    </source>
</reference>
<gene>
    <name evidence="1" type="primary">dsbI</name>
    <name type="ordered locus">SPA3062</name>
</gene>
<evidence type="ECO:0000255" key="1">
    <source>
        <dbReference type="HAMAP-Rule" id="MF_01311"/>
    </source>
</evidence>
<sequence length="225" mass="25343">MDFIKGLWRDLRARPVDTLVRWQEQRFLWLLMAIAMGGLIILAHSFFQIYLYMAPCEQCVYIRYAMFVMVIGGVIAAINPKNIVLKLIGCIAAFYGSIMGIKFSIKLNGIHHAVHNADPDSLFGVQGCSTDPTFPFNLPLAEWAPEWFKPTGDCGYDAPIVPDGVTLSSVQQWFVDLYQQSEGWYLLPPWHFMNMAQACMLAFGLCLILLLVMSGAWALKLARGK</sequence>
<accession>Q5PMU6</accession>
<proteinExistence type="inferred from homology"/>
<protein>
    <recommendedName>
        <fullName evidence="1">Protein-disulfide oxidoreductase DsbI</fullName>
    </recommendedName>
</protein>
<organism>
    <name type="scientific">Salmonella paratyphi A (strain ATCC 9150 / SARB42)</name>
    <dbReference type="NCBI Taxonomy" id="295319"/>
    <lineage>
        <taxon>Bacteria</taxon>
        <taxon>Pseudomonadati</taxon>
        <taxon>Pseudomonadota</taxon>
        <taxon>Gammaproteobacteria</taxon>
        <taxon>Enterobacterales</taxon>
        <taxon>Enterobacteriaceae</taxon>
        <taxon>Salmonella</taxon>
    </lineage>
</organism>
<dbReference type="EMBL" id="CP000026">
    <property type="protein sequence ID" value="AAV78897.1"/>
    <property type="molecule type" value="Genomic_DNA"/>
</dbReference>
<dbReference type="RefSeq" id="WP_000345576.1">
    <property type="nucleotide sequence ID" value="NC_006511.1"/>
</dbReference>
<dbReference type="KEGG" id="spt:SPA3062"/>
<dbReference type="HOGENOM" id="CLU_090583_1_0_6"/>
<dbReference type="Proteomes" id="UP000008185">
    <property type="component" value="Chromosome"/>
</dbReference>
<dbReference type="GO" id="GO:0005886">
    <property type="term" value="C:plasma membrane"/>
    <property type="evidence" value="ECO:0007669"/>
    <property type="project" value="UniProtKB-SubCell"/>
</dbReference>
<dbReference type="GO" id="GO:0015035">
    <property type="term" value="F:protein-disulfide reductase activity"/>
    <property type="evidence" value="ECO:0007669"/>
    <property type="project" value="UniProtKB-UniRule"/>
</dbReference>
<dbReference type="GO" id="GO:0006457">
    <property type="term" value="P:protein folding"/>
    <property type="evidence" value="ECO:0007669"/>
    <property type="project" value="InterPro"/>
</dbReference>
<dbReference type="Gene3D" id="1.20.1550.10">
    <property type="entry name" value="DsbB-like"/>
    <property type="match status" value="1"/>
</dbReference>
<dbReference type="HAMAP" id="MF_01311">
    <property type="entry name" value="DsbI"/>
    <property type="match status" value="1"/>
</dbReference>
<dbReference type="InterPro" id="IPR003752">
    <property type="entry name" value="DiS_bond_form_DsbB/BdbC"/>
</dbReference>
<dbReference type="InterPro" id="IPR023792">
    <property type="entry name" value="DiS_OxRdtase_Dsbl"/>
</dbReference>
<dbReference type="InterPro" id="IPR050183">
    <property type="entry name" value="DsbB"/>
</dbReference>
<dbReference type="InterPro" id="IPR023380">
    <property type="entry name" value="DsbB-like_sf"/>
</dbReference>
<dbReference type="NCBIfam" id="NF003304">
    <property type="entry name" value="PRK04307.1"/>
    <property type="match status" value="1"/>
</dbReference>
<dbReference type="PANTHER" id="PTHR36570">
    <property type="entry name" value="DISULFIDE BOND FORMATION PROTEIN B"/>
    <property type="match status" value="1"/>
</dbReference>
<dbReference type="PANTHER" id="PTHR36570:SF1">
    <property type="entry name" value="PROTEIN-DISULFIDE OXIDOREDUCTASE DSBI"/>
    <property type="match status" value="1"/>
</dbReference>
<dbReference type="Pfam" id="PF02600">
    <property type="entry name" value="DsbB"/>
    <property type="match status" value="1"/>
</dbReference>
<dbReference type="SUPFAM" id="SSF158442">
    <property type="entry name" value="DsbB-like"/>
    <property type="match status" value="1"/>
</dbReference>